<sequence>MSTEALLEQIGKLTLVEAADLVKKMEDKFGISAAAPVAVAAVGAAPAGAGAAEEASTFNVILKGFDSAKKIEVIKLVREITGLGLADAKGLVEAGGKAVKEGVAKAEADDLKKKFEGAGAQIELKAS</sequence>
<name>RL7_LEPIN</name>
<accession>Q8F0S1</accession>
<protein>
    <recommendedName>
        <fullName evidence="1">Large ribosomal subunit protein bL12</fullName>
    </recommendedName>
    <alternativeName>
        <fullName evidence="2">50S ribosomal protein L7/L12</fullName>
    </alternativeName>
</protein>
<comment type="function">
    <text evidence="1">Forms part of the ribosomal stalk which helps the ribosome interact with GTP-bound translation factors. Is thus essential for accurate translation.</text>
</comment>
<comment type="subunit">
    <text evidence="1">Homodimer. Part of the ribosomal stalk of the 50S ribosomal subunit. Forms a multimeric L10(L12)X complex, where L10 forms an elongated spine to which 2 to 4 L12 dimers bind in a sequential fashion. Binds GTP-bound translation factors.</text>
</comment>
<comment type="similarity">
    <text evidence="1">Belongs to the bacterial ribosomal protein bL12 family.</text>
</comment>
<gene>
    <name evidence="1" type="primary">rplL</name>
    <name type="ordered locus">LA_3421</name>
</gene>
<organism>
    <name type="scientific">Leptospira interrogans serogroup Icterohaemorrhagiae serovar Lai (strain 56601)</name>
    <dbReference type="NCBI Taxonomy" id="189518"/>
    <lineage>
        <taxon>Bacteria</taxon>
        <taxon>Pseudomonadati</taxon>
        <taxon>Spirochaetota</taxon>
        <taxon>Spirochaetia</taxon>
        <taxon>Leptospirales</taxon>
        <taxon>Leptospiraceae</taxon>
        <taxon>Leptospira</taxon>
    </lineage>
</organism>
<feature type="chain" id="PRO_0000157541" description="Large ribosomal subunit protein bL12">
    <location>
        <begin position="1"/>
        <end position="127"/>
    </location>
</feature>
<keyword id="KW-1185">Reference proteome</keyword>
<keyword id="KW-0687">Ribonucleoprotein</keyword>
<keyword id="KW-0689">Ribosomal protein</keyword>
<dbReference type="EMBL" id="AE010300">
    <property type="protein sequence ID" value="AAN50619.1"/>
    <property type="molecule type" value="Genomic_DNA"/>
</dbReference>
<dbReference type="RefSeq" id="NP_713601.1">
    <property type="nucleotide sequence ID" value="NC_004342.2"/>
</dbReference>
<dbReference type="RefSeq" id="WP_000102400.1">
    <property type="nucleotide sequence ID" value="NC_004342.2"/>
</dbReference>
<dbReference type="SMR" id="Q8F0S1"/>
<dbReference type="FunCoup" id="Q8F0S1">
    <property type="interactions" value="577"/>
</dbReference>
<dbReference type="STRING" id="189518.LA_3421"/>
<dbReference type="PaxDb" id="189518-LA_3421"/>
<dbReference type="EnsemblBacteria" id="AAN50619">
    <property type="protein sequence ID" value="AAN50619"/>
    <property type="gene ID" value="LA_3421"/>
</dbReference>
<dbReference type="GeneID" id="61144092"/>
<dbReference type="KEGG" id="lil:LA_3421"/>
<dbReference type="PATRIC" id="fig|189518.3.peg.3386"/>
<dbReference type="HOGENOM" id="CLU_086499_3_0_12"/>
<dbReference type="InParanoid" id="Q8F0S1"/>
<dbReference type="OrthoDB" id="9811748at2"/>
<dbReference type="Proteomes" id="UP000001408">
    <property type="component" value="Chromosome I"/>
</dbReference>
<dbReference type="GO" id="GO:0022625">
    <property type="term" value="C:cytosolic large ribosomal subunit"/>
    <property type="evidence" value="ECO:0000318"/>
    <property type="project" value="GO_Central"/>
</dbReference>
<dbReference type="GO" id="GO:0003729">
    <property type="term" value="F:mRNA binding"/>
    <property type="evidence" value="ECO:0000318"/>
    <property type="project" value="GO_Central"/>
</dbReference>
<dbReference type="GO" id="GO:0003735">
    <property type="term" value="F:structural constituent of ribosome"/>
    <property type="evidence" value="ECO:0000318"/>
    <property type="project" value="GO_Central"/>
</dbReference>
<dbReference type="GO" id="GO:0006412">
    <property type="term" value="P:translation"/>
    <property type="evidence" value="ECO:0000318"/>
    <property type="project" value="GO_Central"/>
</dbReference>
<dbReference type="CDD" id="cd00387">
    <property type="entry name" value="Ribosomal_L7_L12"/>
    <property type="match status" value="1"/>
</dbReference>
<dbReference type="FunFam" id="3.30.1390.10:FF:000001">
    <property type="entry name" value="50S ribosomal protein L7/L12"/>
    <property type="match status" value="1"/>
</dbReference>
<dbReference type="Gene3D" id="3.30.1390.10">
    <property type="match status" value="1"/>
</dbReference>
<dbReference type="Gene3D" id="1.20.5.710">
    <property type="entry name" value="Single helix bin"/>
    <property type="match status" value="1"/>
</dbReference>
<dbReference type="HAMAP" id="MF_00368">
    <property type="entry name" value="Ribosomal_bL12"/>
    <property type="match status" value="1"/>
</dbReference>
<dbReference type="InterPro" id="IPR000206">
    <property type="entry name" value="Ribosomal_bL12"/>
</dbReference>
<dbReference type="InterPro" id="IPR013823">
    <property type="entry name" value="Ribosomal_bL12_C"/>
</dbReference>
<dbReference type="InterPro" id="IPR014719">
    <property type="entry name" value="Ribosomal_bL12_C/ClpS-like"/>
</dbReference>
<dbReference type="InterPro" id="IPR008932">
    <property type="entry name" value="Ribosomal_bL12_oligo"/>
</dbReference>
<dbReference type="InterPro" id="IPR036235">
    <property type="entry name" value="Ribosomal_bL12_oligo_N_sf"/>
</dbReference>
<dbReference type="NCBIfam" id="TIGR00855">
    <property type="entry name" value="L12"/>
    <property type="match status" value="1"/>
</dbReference>
<dbReference type="PANTHER" id="PTHR45987">
    <property type="entry name" value="39S RIBOSOMAL PROTEIN L12"/>
    <property type="match status" value="1"/>
</dbReference>
<dbReference type="PANTHER" id="PTHR45987:SF4">
    <property type="entry name" value="LARGE RIBOSOMAL SUBUNIT PROTEIN BL12M"/>
    <property type="match status" value="1"/>
</dbReference>
<dbReference type="Pfam" id="PF00542">
    <property type="entry name" value="Ribosomal_L12"/>
    <property type="match status" value="1"/>
</dbReference>
<dbReference type="Pfam" id="PF16320">
    <property type="entry name" value="Ribosomal_L12_N"/>
    <property type="match status" value="1"/>
</dbReference>
<dbReference type="SUPFAM" id="SSF54736">
    <property type="entry name" value="ClpS-like"/>
    <property type="match status" value="1"/>
</dbReference>
<dbReference type="SUPFAM" id="SSF48300">
    <property type="entry name" value="Ribosomal protein L7/12, oligomerisation (N-terminal) domain"/>
    <property type="match status" value="1"/>
</dbReference>
<proteinExistence type="inferred from homology"/>
<reference key="1">
    <citation type="journal article" date="2003" name="Nature">
        <title>Unique physiological and pathogenic features of Leptospira interrogans revealed by whole-genome sequencing.</title>
        <authorList>
            <person name="Ren S.-X."/>
            <person name="Fu G."/>
            <person name="Jiang X.-G."/>
            <person name="Zeng R."/>
            <person name="Miao Y.-G."/>
            <person name="Xu H."/>
            <person name="Zhang Y.-X."/>
            <person name="Xiong H."/>
            <person name="Lu G."/>
            <person name="Lu L.-F."/>
            <person name="Jiang H.-Q."/>
            <person name="Jia J."/>
            <person name="Tu Y.-F."/>
            <person name="Jiang J.-X."/>
            <person name="Gu W.-Y."/>
            <person name="Zhang Y.-Q."/>
            <person name="Cai Z."/>
            <person name="Sheng H.-H."/>
            <person name="Yin H.-F."/>
            <person name="Zhang Y."/>
            <person name="Zhu G.-F."/>
            <person name="Wan M."/>
            <person name="Huang H.-L."/>
            <person name="Qian Z."/>
            <person name="Wang S.-Y."/>
            <person name="Ma W."/>
            <person name="Yao Z.-J."/>
            <person name="Shen Y."/>
            <person name="Qiang B.-Q."/>
            <person name="Xia Q.-C."/>
            <person name="Guo X.-K."/>
            <person name="Danchin A."/>
            <person name="Saint Girons I."/>
            <person name="Somerville R.L."/>
            <person name="Wen Y.-M."/>
            <person name="Shi M.-H."/>
            <person name="Chen Z."/>
            <person name="Xu J.-G."/>
            <person name="Zhao G.-P."/>
        </authorList>
    </citation>
    <scope>NUCLEOTIDE SEQUENCE [LARGE SCALE GENOMIC DNA]</scope>
    <source>
        <strain>56601</strain>
    </source>
</reference>
<evidence type="ECO:0000255" key="1">
    <source>
        <dbReference type="HAMAP-Rule" id="MF_00368"/>
    </source>
</evidence>
<evidence type="ECO:0000305" key="2"/>